<gene>
    <name evidence="1" type="primary">lgt</name>
    <name type="ordered locus">NFA_18630</name>
</gene>
<accession>Q5YYN2</accession>
<name>LGT_NOCFA</name>
<comment type="function">
    <text evidence="1">Catalyzes the transfer of the diacylglyceryl group from phosphatidylglycerol to the sulfhydryl group of the N-terminal cysteine of a prolipoprotein, the first step in the formation of mature lipoproteins.</text>
</comment>
<comment type="catalytic activity">
    <reaction evidence="1">
        <text>L-cysteinyl-[prolipoprotein] + a 1,2-diacyl-sn-glycero-3-phospho-(1'-sn-glycerol) = an S-1,2-diacyl-sn-glyceryl-L-cysteinyl-[prolipoprotein] + sn-glycerol 1-phosphate + H(+)</text>
        <dbReference type="Rhea" id="RHEA:56712"/>
        <dbReference type="Rhea" id="RHEA-COMP:14679"/>
        <dbReference type="Rhea" id="RHEA-COMP:14680"/>
        <dbReference type="ChEBI" id="CHEBI:15378"/>
        <dbReference type="ChEBI" id="CHEBI:29950"/>
        <dbReference type="ChEBI" id="CHEBI:57685"/>
        <dbReference type="ChEBI" id="CHEBI:64716"/>
        <dbReference type="ChEBI" id="CHEBI:140658"/>
        <dbReference type="EC" id="2.5.1.145"/>
    </reaction>
</comment>
<comment type="pathway">
    <text evidence="1">Protein modification; lipoprotein biosynthesis (diacylglyceryl transfer).</text>
</comment>
<comment type="subcellular location">
    <subcellularLocation>
        <location evidence="1">Cell membrane</location>
        <topology evidence="1">Multi-pass membrane protein</topology>
    </subcellularLocation>
</comment>
<comment type="similarity">
    <text evidence="1">Belongs to the Lgt family.</text>
</comment>
<dbReference type="EC" id="2.5.1.145" evidence="1"/>
<dbReference type="EMBL" id="AP006618">
    <property type="protein sequence ID" value="BAD56709.1"/>
    <property type="molecule type" value="Genomic_DNA"/>
</dbReference>
<dbReference type="RefSeq" id="WP_011208394.1">
    <property type="nucleotide sequence ID" value="NC_006361.1"/>
</dbReference>
<dbReference type="SMR" id="Q5YYN2"/>
<dbReference type="STRING" id="247156.NFA_18630"/>
<dbReference type="GeneID" id="61132647"/>
<dbReference type="KEGG" id="nfa:NFA_18630"/>
<dbReference type="eggNOG" id="COG0682">
    <property type="taxonomic scope" value="Bacteria"/>
</dbReference>
<dbReference type="HOGENOM" id="CLU_013386_2_1_11"/>
<dbReference type="OrthoDB" id="871140at2"/>
<dbReference type="UniPathway" id="UPA00664"/>
<dbReference type="Proteomes" id="UP000006820">
    <property type="component" value="Chromosome"/>
</dbReference>
<dbReference type="GO" id="GO:0005886">
    <property type="term" value="C:plasma membrane"/>
    <property type="evidence" value="ECO:0007669"/>
    <property type="project" value="UniProtKB-SubCell"/>
</dbReference>
<dbReference type="GO" id="GO:0008961">
    <property type="term" value="F:phosphatidylglycerol-prolipoprotein diacylglyceryl transferase activity"/>
    <property type="evidence" value="ECO:0007669"/>
    <property type="project" value="UniProtKB-UniRule"/>
</dbReference>
<dbReference type="GO" id="GO:0042158">
    <property type="term" value="P:lipoprotein biosynthetic process"/>
    <property type="evidence" value="ECO:0007669"/>
    <property type="project" value="UniProtKB-UniRule"/>
</dbReference>
<dbReference type="HAMAP" id="MF_01147">
    <property type="entry name" value="Lgt"/>
    <property type="match status" value="1"/>
</dbReference>
<dbReference type="InterPro" id="IPR001640">
    <property type="entry name" value="Lgt"/>
</dbReference>
<dbReference type="NCBIfam" id="TIGR00544">
    <property type="entry name" value="lgt"/>
    <property type="match status" value="1"/>
</dbReference>
<dbReference type="NCBIfam" id="NF009611">
    <property type="entry name" value="PRK13108.1"/>
    <property type="match status" value="1"/>
</dbReference>
<dbReference type="PANTHER" id="PTHR30589:SF0">
    <property type="entry name" value="PHOSPHATIDYLGLYCEROL--PROLIPOPROTEIN DIACYLGLYCERYL TRANSFERASE"/>
    <property type="match status" value="1"/>
</dbReference>
<dbReference type="PANTHER" id="PTHR30589">
    <property type="entry name" value="PROLIPOPROTEIN DIACYLGLYCERYL TRANSFERASE"/>
    <property type="match status" value="1"/>
</dbReference>
<dbReference type="Pfam" id="PF01790">
    <property type="entry name" value="LGT"/>
    <property type="match status" value="1"/>
</dbReference>
<dbReference type="PROSITE" id="PS01311">
    <property type="entry name" value="LGT"/>
    <property type="match status" value="1"/>
</dbReference>
<protein>
    <recommendedName>
        <fullName evidence="1">Phosphatidylglycerol--prolipoprotein diacylglyceryl transferase</fullName>
        <ecNumber evidence="1">2.5.1.145</ecNumber>
    </recommendedName>
</protein>
<organism>
    <name type="scientific">Nocardia farcinica (strain IFM 10152)</name>
    <dbReference type="NCBI Taxonomy" id="247156"/>
    <lineage>
        <taxon>Bacteria</taxon>
        <taxon>Bacillati</taxon>
        <taxon>Actinomycetota</taxon>
        <taxon>Actinomycetes</taxon>
        <taxon>Mycobacteriales</taxon>
        <taxon>Nocardiaceae</taxon>
        <taxon>Nocardia</taxon>
    </lineage>
</organism>
<sequence length="491" mass="50921">MTLRSDVLAYIPSPPQGVWHIGPIPLRAYALCIILGIVVAIWWGERRWQQRGGREGTVLDVAMFAVPFGLIGGRAYHVATDWRKYFGEGGNPVEALYIWQGGLGIWGAVFLGGIGAWIACRIYRIPLPAFGDAIAPPILLAQAIGRLGNWFNQELYGRETTLPWGLEIYPRFDAAGDPDPMNGISNGVVEKIVHPTFLYELLWNVLVVIALVQLDKRFRIGHGRLFALYVAGYSFGRFFVELMRDDEATLVAGIRINNFTSALVFLAAIAYFVFATKGREAPERLQPGGTTRPWPWQLAALRAAGVAANGPAEPGATASTATDTDGDAKDTPPSDAAATGGQGTAAKGDRGTADAADTAKDASATDSASNSASATDSDFGETAGSSDDADRAAAVKAASGATAAEKSAADKESAAGEAAADTSAADQPAADKSGSAKSAADKSAGKSGAGRGNESESTRDNESTSAGTAASATGSAGAGATDRVDSGENDA</sequence>
<reference key="1">
    <citation type="journal article" date="2004" name="Proc. Natl. Acad. Sci. U.S.A.">
        <title>The complete genomic sequence of Nocardia farcinica IFM 10152.</title>
        <authorList>
            <person name="Ishikawa J."/>
            <person name="Yamashita A."/>
            <person name="Mikami Y."/>
            <person name="Hoshino Y."/>
            <person name="Kurita H."/>
            <person name="Hotta K."/>
            <person name="Shiba T."/>
            <person name="Hattori M."/>
        </authorList>
    </citation>
    <scope>NUCLEOTIDE SEQUENCE [LARGE SCALE GENOMIC DNA]</scope>
    <source>
        <strain>IFM 10152</strain>
    </source>
</reference>
<feature type="chain" id="PRO_0000172643" description="Phosphatidylglycerol--prolipoprotein diacylglyceryl transferase">
    <location>
        <begin position="1"/>
        <end position="491"/>
    </location>
</feature>
<feature type="transmembrane region" description="Helical" evidence="1">
    <location>
        <begin position="24"/>
        <end position="44"/>
    </location>
</feature>
<feature type="transmembrane region" description="Helical" evidence="1">
    <location>
        <begin position="58"/>
        <end position="78"/>
    </location>
</feature>
<feature type="transmembrane region" description="Helical" evidence="1">
    <location>
        <begin position="98"/>
        <end position="118"/>
    </location>
</feature>
<feature type="transmembrane region" description="Helical" evidence="1">
    <location>
        <begin position="192"/>
        <end position="212"/>
    </location>
</feature>
<feature type="transmembrane region" description="Helical" evidence="1">
    <location>
        <begin position="256"/>
        <end position="276"/>
    </location>
</feature>
<feature type="region of interest" description="Disordered" evidence="2">
    <location>
        <begin position="309"/>
        <end position="491"/>
    </location>
</feature>
<feature type="compositionally biased region" description="Low complexity" evidence="2">
    <location>
        <begin position="309"/>
        <end position="323"/>
    </location>
</feature>
<feature type="compositionally biased region" description="Basic and acidic residues" evidence="2">
    <location>
        <begin position="347"/>
        <end position="360"/>
    </location>
</feature>
<feature type="compositionally biased region" description="Low complexity" evidence="2">
    <location>
        <begin position="361"/>
        <end position="387"/>
    </location>
</feature>
<feature type="compositionally biased region" description="Low complexity" evidence="2">
    <location>
        <begin position="394"/>
        <end position="406"/>
    </location>
</feature>
<feature type="compositionally biased region" description="Low complexity" evidence="2">
    <location>
        <begin position="415"/>
        <end position="438"/>
    </location>
</feature>
<feature type="compositionally biased region" description="Basic and acidic residues" evidence="2">
    <location>
        <begin position="453"/>
        <end position="462"/>
    </location>
</feature>
<feature type="compositionally biased region" description="Low complexity" evidence="2">
    <location>
        <begin position="463"/>
        <end position="481"/>
    </location>
</feature>
<feature type="compositionally biased region" description="Basic and acidic residues" evidence="2">
    <location>
        <begin position="482"/>
        <end position="491"/>
    </location>
</feature>
<feature type="binding site" evidence="1">
    <location>
        <position position="146"/>
    </location>
    <ligand>
        <name>a 1,2-diacyl-sn-glycero-3-phospho-(1'-sn-glycerol)</name>
        <dbReference type="ChEBI" id="CHEBI:64716"/>
    </ligand>
</feature>
<keyword id="KW-1003">Cell membrane</keyword>
<keyword id="KW-0472">Membrane</keyword>
<keyword id="KW-1185">Reference proteome</keyword>
<keyword id="KW-0808">Transferase</keyword>
<keyword id="KW-0812">Transmembrane</keyword>
<keyword id="KW-1133">Transmembrane helix</keyword>
<evidence type="ECO:0000255" key="1">
    <source>
        <dbReference type="HAMAP-Rule" id="MF_01147"/>
    </source>
</evidence>
<evidence type="ECO:0000256" key="2">
    <source>
        <dbReference type="SAM" id="MobiDB-lite"/>
    </source>
</evidence>
<proteinExistence type="inferred from homology"/>